<name>ENGB_ACIET</name>
<sequence>MGWMHTARFLTTAAQLHHLPAIEVPEIAFVGRSNAGKSTCINTLTQQRQLAFASKKPGRTQHINLFALGKQGATDAVLADLPGYGYAAVSRSDKLRWQQVMLSYLVSRESLTAIVLLCDPRLGLTELDEALLNAVRPRVEAGLKFLVLLTKADKLTRAEQAKALSITRLQAGGGEVRMFSALKKQGVDEVAQLLWQWAHPVQKEDAAVEALPPSKDQN</sequence>
<keyword id="KW-0131">Cell cycle</keyword>
<keyword id="KW-0132">Cell division</keyword>
<keyword id="KW-0342">GTP-binding</keyword>
<keyword id="KW-0460">Magnesium</keyword>
<keyword id="KW-0479">Metal-binding</keyword>
<keyword id="KW-0547">Nucleotide-binding</keyword>
<keyword id="KW-1185">Reference proteome</keyword>
<keyword id="KW-0717">Septation</keyword>
<gene>
    <name evidence="1" type="primary">engB</name>
    <name type="ordered locus">Dtpsy_0689</name>
</gene>
<dbReference type="EMBL" id="CP001392">
    <property type="protein sequence ID" value="ACM32168.1"/>
    <property type="molecule type" value="Genomic_DNA"/>
</dbReference>
<dbReference type="SMR" id="B9MDD6"/>
<dbReference type="KEGG" id="dia:Dtpsy_0689"/>
<dbReference type="eggNOG" id="COG0218">
    <property type="taxonomic scope" value="Bacteria"/>
</dbReference>
<dbReference type="HOGENOM" id="CLU_033732_1_1_4"/>
<dbReference type="Proteomes" id="UP000000450">
    <property type="component" value="Chromosome"/>
</dbReference>
<dbReference type="GO" id="GO:0005829">
    <property type="term" value="C:cytosol"/>
    <property type="evidence" value="ECO:0007669"/>
    <property type="project" value="TreeGrafter"/>
</dbReference>
<dbReference type="GO" id="GO:0005525">
    <property type="term" value="F:GTP binding"/>
    <property type="evidence" value="ECO:0007669"/>
    <property type="project" value="UniProtKB-UniRule"/>
</dbReference>
<dbReference type="GO" id="GO:0046872">
    <property type="term" value="F:metal ion binding"/>
    <property type="evidence" value="ECO:0007669"/>
    <property type="project" value="UniProtKB-KW"/>
</dbReference>
<dbReference type="GO" id="GO:0000917">
    <property type="term" value="P:division septum assembly"/>
    <property type="evidence" value="ECO:0007669"/>
    <property type="project" value="UniProtKB-KW"/>
</dbReference>
<dbReference type="CDD" id="cd01876">
    <property type="entry name" value="YihA_EngB"/>
    <property type="match status" value="1"/>
</dbReference>
<dbReference type="Gene3D" id="3.40.50.300">
    <property type="entry name" value="P-loop containing nucleotide triphosphate hydrolases"/>
    <property type="match status" value="1"/>
</dbReference>
<dbReference type="HAMAP" id="MF_00321">
    <property type="entry name" value="GTPase_EngB"/>
    <property type="match status" value="1"/>
</dbReference>
<dbReference type="InterPro" id="IPR030393">
    <property type="entry name" value="G_ENGB_dom"/>
</dbReference>
<dbReference type="InterPro" id="IPR006073">
    <property type="entry name" value="GTP-bd"/>
</dbReference>
<dbReference type="InterPro" id="IPR019987">
    <property type="entry name" value="GTP-bd_ribosome_bio_YsxC"/>
</dbReference>
<dbReference type="InterPro" id="IPR027417">
    <property type="entry name" value="P-loop_NTPase"/>
</dbReference>
<dbReference type="NCBIfam" id="TIGR03598">
    <property type="entry name" value="GTPase_YsxC"/>
    <property type="match status" value="1"/>
</dbReference>
<dbReference type="PANTHER" id="PTHR11649:SF13">
    <property type="entry name" value="ENGB-TYPE G DOMAIN-CONTAINING PROTEIN"/>
    <property type="match status" value="1"/>
</dbReference>
<dbReference type="PANTHER" id="PTHR11649">
    <property type="entry name" value="MSS1/TRME-RELATED GTP-BINDING PROTEIN"/>
    <property type="match status" value="1"/>
</dbReference>
<dbReference type="Pfam" id="PF01926">
    <property type="entry name" value="MMR_HSR1"/>
    <property type="match status" value="1"/>
</dbReference>
<dbReference type="SUPFAM" id="SSF52540">
    <property type="entry name" value="P-loop containing nucleoside triphosphate hydrolases"/>
    <property type="match status" value="1"/>
</dbReference>
<dbReference type="PROSITE" id="PS51706">
    <property type="entry name" value="G_ENGB"/>
    <property type="match status" value="1"/>
</dbReference>
<protein>
    <recommendedName>
        <fullName evidence="1">Probable GTP-binding protein EngB</fullName>
    </recommendedName>
</protein>
<proteinExistence type="inferred from homology"/>
<accession>B9MDD6</accession>
<reference key="1">
    <citation type="submission" date="2009-01" db="EMBL/GenBank/DDBJ databases">
        <title>Complete sequence of Diaphorobacter sp. TPSY.</title>
        <authorList>
            <consortium name="US DOE Joint Genome Institute"/>
            <person name="Lucas S."/>
            <person name="Copeland A."/>
            <person name="Lapidus A."/>
            <person name="Glavina del Rio T."/>
            <person name="Tice H."/>
            <person name="Bruce D."/>
            <person name="Goodwin L."/>
            <person name="Pitluck S."/>
            <person name="Chertkov O."/>
            <person name="Brettin T."/>
            <person name="Detter J.C."/>
            <person name="Han C."/>
            <person name="Larimer F."/>
            <person name="Land M."/>
            <person name="Hauser L."/>
            <person name="Kyrpides N."/>
            <person name="Mikhailova N."/>
            <person name="Coates J.D."/>
        </authorList>
    </citation>
    <scope>NUCLEOTIDE SEQUENCE [LARGE SCALE GENOMIC DNA]</scope>
    <source>
        <strain>TPSY</strain>
    </source>
</reference>
<feature type="chain" id="PRO_1000189920" description="Probable GTP-binding protein EngB">
    <location>
        <begin position="1"/>
        <end position="218"/>
    </location>
</feature>
<feature type="domain" description="EngB-type G" evidence="1">
    <location>
        <begin position="23"/>
        <end position="200"/>
    </location>
</feature>
<feature type="binding site" evidence="1">
    <location>
        <begin position="31"/>
        <end position="38"/>
    </location>
    <ligand>
        <name>GTP</name>
        <dbReference type="ChEBI" id="CHEBI:37565"/>
    </ligand>
</feature>
<feature type="binding site" evidence="1">
    <location>
        <position position="38"/>
    </location>
    <ligand>
        <name>Mg(2+)</name>
        <dbReference type="ChEBI" id="CHEBI:18420"/>
    </ligand>
</feature>
<feature type="binding site" evidence="1">
    <location>
        <begin position="58"/>
        <end position="62"/>
    </location>
    <ligand>
        <name>GTP</name>
        <dbReference type="ChEBI" id="CHEBI:37565"/>
    </ligand>
</feature>
<feature type="binding site" evidence="1">
    <location>
        <position position="60"/>
    </location>
    <ligand>
        <name>Mg(2+)</name>
        <dbReference type="ChEBI" id="CHEBI:18420"/>
    </ligand>
</feature>
<feature type="binding site" evidence="1">
    <location>
        <begin position="80"/>
        <end position="83"/>
    </location>
    <ligand>
        <name>GTP</name>
        <dbReference type="ChEBI" id="CHEBI:37565"/>
    </ligand>
</feature>
<feature type="binding site" evidence="1">
    <location>
        <begin position="150"/>
        <end position="153"/>
    </location>
    <ligand>
        <name>GTP</name>
        <dbReference type="ChEBI" id="CHEBI:37565"/>
    </ligand>
</feature>
<feature type="binding site" evidence="1">
    <location>
        <begin position="179"/>
        <end position="181"/>
    </location>
    <ligand>
        <name>GTP</name>
        <dbReference type="ChEBI" id="CHEBI:37565"/>
    </ligand>
</feature>
<evidence type="ECO:0000255" key="1">
    <source>
        <dbReference type="HAMAP-Rule" id="MF_00321"/>
    </source>
</evidence>
<comment type="function">
    <text evidence="1">Necessary for normal cell division and for the maintenance of normal septation.</text>
</comment>
<comment type="cofactor">
    <cofactor evidence="1">
        <name>Mg(2+)</name>
        <dbReference type="ChEBI" id="CHEBI:18420"/>
    </cofactor>
</comment>
<comment type="similarity">
    <text evidence="1">Belongs to the TRAFAC class TrmE-Era-EngA-EngB-Septin-like GTPase superfamily. EngB GTPase family.</text>
</comment>
<organism>
    <name type="scientific">Acidovorax ebreus (strain TPSY)</name>
    <name type="common">Diaphorobacter sp. (strain TPSY)</name>
    <dbReference type="NCBI Taxonomy" id="535289"/>
    <lineage>
        <taxon>Bacteria</taxon>
        <taxon>Pseudomonadati</taxon>
        <taxon>Pseudomonadota</taxon>
        <taxon>Betaproteobacteria</taxon>
        <taxon>Burkholderiales</taxon>
        <taxon>Comamonadaceae</taxon>
        <taxon>Diaphorobacter</taxon>
    </lineage>
</organism>